<dbReference type="EC" id="3.4.13.21" evidence="1"/>
<dbReference type="EMBL" id="CU928160">
    <property type="protein sequence ID" value="CAR00993.1"/>
    <property type="molecule type" value="Genomic_DNA"/>
</dbReference>
<dbReference type="RefSeq" id="WP_000421763.1">
    <property type="nucleotide sequence ID" value="NC_011741.1"/>
</dbReference>
<dbReference type="SMR" id="B7M7S7"/>
<dbReference type="MEROPS" id="S51.001"/>
<dbReference type="GeneID" id="93777874"/>
<dbReference type="KEGG" id="ecr:ECIAI1_4243"/>
<dbReference type="HOGENOM" id="CLU_071689_0_0_6"/>
<dbReference type="GO" id="GO:0005737">
    <property type="term" value="C:cytoplasm"/>
    <property type="evidence" value="ECO:0007669"/>
    <property type="project" value="UniProtKB-SubCell"/>
</dbReference>
<dbReference type="GO" id="GO:0016805">
    <property type="term" value="F:dipeptidase activity"/>
    <property type="evidence" value="ECO:0007669"/>
    <property type="project" value="UniProtKB-UniRule"/>
</dbReference>
<dbReference type="GO" id="GO:0008236">
    <property type="term" value="F:serine-type peptidase activity"/>
    <property type="evidence" value="ECO:0007669"/>
    <property type="project" value="UniProtKB-KW"/>
</dbReference>
<dbReference type="GO" id="GO:0006508">
    <property type="term" value="P:proteolysis"/>
    <property type="evidence" value="ECO:0007669"/>
    <property type="project" value="UniProtKB-UniRule"/>
</dbReference>
<dbReference type="CDD" id="cd03146">
    <property type="entry name" value="GAT1_Peptidase_E"/>
    <property type="match status" value="1"/>
</dbReference>
<dbReference type="FunFam" id="3.40.50.880:FF:000007">
    <property type="entry name" value="Peptidase E"/>
    <property type="match status" value="1"/>
</dbReference>
<dbReference type="Gene3D" id="3.40.50.880">
    <property type="match status" value="1"/>
</dbReference>
<dbReference type="HAMAP" id="MF_00510">
    <property type="entry name" value="Peptidase_E"/>
    <property type="match status" value="1"/>
</dbReference>
<dbReference type="InterPro" id="IPR029062">
    <property type="entry name" value="Class_I_gatase-like"/>
</dbReference>
<dbReference type="InterPro" id="IPR005320">
    <property type="entry name" value="Peptidase_S51"/>
</dbReference>
<dbReference type="InterPro" id="IPR023172">
    <property type="entry name" value="Peptidase_S51_dipeptidase-E"/>
</dbReference>
<dbReference type="NCBIfam" id="NF003642">
    <property type="entry name" value="PRK05282.1"/>
    <property type="match status" value="1"/>
</dbReference>
<dbReference type="PANTHER" id="PTHR20842:SF0">
    <property type="entry name" value="ALPHA-ASPARTYL DIPEPTIDASE"/>
    <property type="match status" value="1"/>
</dbReference>
<dbReference type="PANTHER" id="PTHR20842">
    <property type="entry name" value="PROTEASE S51 ALPHA-ASPARTYL DIPEPTIDASE"/>
    <property type="match status" value="1"/>
</dbReference>
<dbReference type="Pfam" id="PF03575">
    <property type="entry name" value="Peptidase_S51"/>
    <property type="match status" value="1"/>
</dbReference>
<dbReference type="SUPFAM" id="SSF52317">
    <property type="entry name" value="Class I glutamine amidotransferase-like"/>
    <property type="match status" value="1"/>
</dbReference>
<keyword id="KW-0963">Cytoplasm</keyword>
<keyword id="KW-0224">Dipeptidase</keyword>
<keyword id="KW-0378">Hydrolase</keyword>
<keyword id="KW-0645">Protease</keyword>
<keyword id="KW-0720">Serine protease</keyword>
<gene>
    <name evidence="1" type="primary">pepE</name>
    <name type="ordered locus">ECIAI1_4243</name>
</gene>
<sequence>MELLLLSNSTLPGKAWLEHALPLIAEQLQGRRSAVFIPFAGVTQTWDDYTAKTAAVLAPLGVSVTGIHSVVDPVAAIENAEIVIVGGGNTFQLLKQCRERGLLAPITDVVKRGALYIGWSAGANLACPTIRTTNDMPIVDPQGFDALNLFPLQINPHFTNALPEGHKGETREQRIRELLVVAPELTIIGLPEGNWITVSKGHATLGGPNTTYVFKAGEEAVPLEAGHRF</sequence>
<reference key="1">
    <citation type="journal article" date="2009" name="PLoS Genet.">
        <title>Organised genome dynamics in the Escherichia coli species results in highly diverse adaptive paths.</title>
        <authorList>
            <person name="Touchon M."/>
            <person name="Hoede C."/>
            <person name="Tenaillon O."/>
            <person name="Barbe V."/>
            <person name="Baeriswyl S."/>
            <person name="Bidet P."/>
            <person name="Bingen E."/>
            <person name="Bonacorsi S."/>
            <person name="Bouchier C."/>
            <person name="Bouvet O."/>
            <person name="Calteau A."/>
            <person name="Chiapello H."/>
            <person name="Clermont O."/>
            <person name="Cruveiller S."/>
            <person name="Danchin A."/>
            <person name="Diard M."/>
            <person name="Dossat C."/>
            <person name="Karoui M.E."/>
            <person name="Frapy E."/>
            <person name="Garry L."/>
            <person name="Ghigo J.M."/>
            <person name="Gilles A.M."/>
            <person name="Johnson J."/>
            <person name="Le Bouguenec C."/>
            <person name="Lescat M."/>
            <person name="Mangenot S."/>
            <person name="Martinez-Jehanne V."/>
            <person name="Matic I."/>
            <person name="Nassif X."/>
            <person name="Oztas S."/>
            <person name="Petit M.A."/>
            <person name="Pichon C."/>
            <person name="Rouy Z."/>
            <person name="Ruf C.S."/>
            <person name="Schneider D."/>
            <person name="Tourret J."/>
            <person name="Vacherie B."/>
            <person name="Vallenet D."/>
            <person name="Medigue C."/>
            <person name="Rocha E.P.C."/>
            <person name="Denamur E."/>
        </authorList>
    </citation>
    <scope>NUCLEOTIDE SEQUENCE [LARGE SCALE GENOMIC DNA]</scope>
    <source>
        <strain>IAI1</strain>
    </source>
</reference>
<feature type="chain" id="PRO_1000127243" description="Peptidase E">
    <location>
        <begin position="1"/>
        <end position="229"/>
    </location>
</feature>
<feature type="active site" description="Charge relay system" evidence="1">
    <location>
        <position position="120"/>
    </location>
</feature>
<feature type="active site" description="Charge relay system" evidence="1">
    <location>
        <position position="135"/>
    </location>
</feature>
<feature type="active site" description="Charge relay system" evidence="1">
    <location>
        <position position="157"/>
    </location>
</feature>
<evidence type="ECO:0000255" key="1">
    <source>
        <dbReference type="HAMAP-Rule" id="MF_00510"/>
    </source>
</evidence>
<name>PEPE_ECO8A</name>
<protein>
    <recommendedName>
        <fullName evidence="1">Peptidase E</fullName>
        <ecNumber evidence="1">3.4.13.21</ecNumber>
    </recommendedName>
    <alternativeName>
        <fullName evidence="1">Alpha-aspartyl dipeptidase</fullName>
    </alternativeName>
    <alternativeName>
        <fullName evidence="1">Asp-specific dipeptidase</fullName>
    </alternativeName>
    <alternativeName>
        <fullName evidence="1">Dipeptidase E</fullName>
    </alternativeName>
</protein>
<proteinExistence type="inferred from homology"/>
<comment type="function">
    <text evidence="1">Hydrolyzes dipeptides containing N-terminal aspartate residues. May play a role in allowing the cell to use peptide aspartate to spare carbon otherwise required for the synthesis of the aspartate family of amino acids.</text>
</comment>
<comment type="catalytic activity">
    <reaction evidence="1">
        <text>Dipeptidase E catalyzes the hydrolysis of dipeptides Asp-|-Xaa. It does not act on peptides with N-terminal Glu, Asn or Gln, nor does it cleave isoaspartyl peptides.</text>
        <dbReference type="EC" id="3.4.13.21"/>
    </reaction>
</comment>
<comment type="subcellular location">
    <subcellularLocation>
        <location evidence="1">Cytoplasm</location>
    </subcellularLocation>
</comment>
<comment type="similarity">
    <text evidence="1">Belongs to the peptidase S51 family.</text>
</comment>
<organism>
    <name type="scientific">Escherichia coli O8 (strain IAI1)</name>
    <dbReference type="NCBI Taxonomy" id="585034"/>
    <lineage>
        <taxon>Bacteria</taxon>
        <taxon>Pseudomonadati</taxon>
        <taxon>Pseudomonadota</taxon>
        <taxon>Gammaproteobacteria</taxon>
        <taxon>Enterobacterales</taxon>
        <taxon>Enterobacteriaceae</taxon>
        <taxon>Escherichia</taxon>
    </lineage>
</organism>
<accession>B7M7S7</accession>